<sequence length="258" mass="28384">MDGIVEQKSVLVHSKIGDAGKRNGLINTRNFMAESRDGLVSVYPAPQYQSHRLVASAAPGSLEGGRSDPVQQLLDPNTLQQSVDSHYRPNIILYSDGVLRSWGDGVATDCCETTFIEDRSPTKDSLEYPDGKFIDLSGDDIKIHTLSYDVEEEEELQELESDYSSDTESEDNFLMMPPRDHLGLSVFSMLCCFWPLGIAAFYLSHETNKAVAKGDFHQASTSSRRALFLAVLSITIGTGIYVGVAVALIAYLSKNNHL</sequence>
<name>SYNG1_RAT</name>
<keyword id="KW-1003">Cell membrane</keyword>
<keyword id="KW-0966">Cell projection</keyword>
<keyword id="KW-0967">Endosome</keyword>
<keyword id="KW-0472">Membrane</keyword>
<keyword id="KW-0597">Phosphoprotein</keyword>
<keyword id="KW-0628">Postsynaptic cell membrane</keyword>
<keyword id="KW-1185">Reference proteome</keyword>
<keyword id="KW-0735">Signal-anchor</keyword>
<keyword id="KW-0770">Synapse</keyword>
<keyword id="KW-0812">Transmembrane</keyword>
<keyword id="KW-1133">Transmembrane helix</keyword>
<dbReference type="EMBL" id="BC092131">
    <property type="protein sequence ID" value="AAH92131.1"/>
    <property type="molecule type" value="mRNA"/>
</dbReference>
<dbReference type="RefSeq" id="NP_001020191.1">
    <property type="nucleotide sequence ID" value="NM_001025020.1"/>
</dbReference>
<dbReference type="RefSeq" id="XP_017447401.1">
    <property type="nucleotide sequence ID" value="XM_017591912.3"/>
</dbReference>
<dbReference type="RefSeq" id="XP_017447402.1">
    <property type="nucleotide sequence ID" value="XM_017591913.3"/>
</dbReference>
<dbReference type="RefSeq" id="XP_017447403.1">
    <property type="nucleotide sequence ID" value="XM_017591914.1"/>
</dbReference>
<dbReference type="RefSeq" id="XP_017447404.1">
    <property type="nucleotide sequence ID" value="XM_017591915.1"/>
</dbReference>
<dbReference type="RefSeq" id="XP_017447405.1">
    <property type="nucleotide sequence ID" value="XM_017591916.3"/>
</dbReference>
<dbReference type="RefSeq" id="XP_017447406.1">
    <property type="nucleotide sequence ID" value="XM_017591917.1"/>
</dbReference>
<dbReference type="RefSeq" id="XP_017447407.1">
    <property type="nucleotide sequence ID" value="XM_017591918.3"/>
</dbReference>
<dbReference type="RefSeq" id="XP_017447408.1">
    <property type="nucleotide sequence ID" value="XM_017591919.1"/>
</dbReference>
<dbReference type="RefSeq" id="XP_017447409.1">
    <property type="nucleotide sequence ID" value="XM_017591920.3"/>
</dbReference>
<dbReference type="RefSeq" id="XP_017447410.1">
    <property type="nucleotide sequence ID" value="XM_017591921.1"/>
</dbReference>
<dbReference type="RefSeq" id="XP_017447411.1">
    <property type="nucleotide sequence ID" value="XM_017591922.3"/>
</dbReference>
<dbReference type="RefSeq" id="XP_038961405.1">
    <property type="nucleotide sequence ID" value="XM_039105477.2"/>
</dbReference>
<dbReference type="RefSeq" id="XP_038961406.1">
    <property type="nucleotide sequence ID" value="XM_039105478.2"/>
</dbReference>
<dbReference type="RefSeq" id="XP_038961408.1">
    <property type="nucleotide sequence ID" value="XM_039105480.2"/>
</dbReference>
<dbReference type="FunCoup" id="Q58DZ9">
    <property type="interactions" value="988"/>
</dbReference>
<dbReference type="STRING" id="10116.ENSRNOP00000060788"/>
<dbReference type="iPTMnet" id="Q58DZ9"/>
<dbReference type="PhosphoSitePlus" id="Q58DZ9"/>
<dbReference type="PaxDb" id="10116-ENSRNOP00000060788"/>
<dbReference type="ABCD" id="Q58DZ9">
    <property type="antibodies" value="1 sequenced antibody"/>
</dbReference>
<dbReference type="Ensembl" id="ENSRNOT00000068210.4">
    <property type="protein sequence ID" value="ENSRNOP00000060788.2"/>
    <property type="gene ID" value="ENSRNOG00000031536.6"/>
</dbReference>
<dbReference type="GeneID" id="362235"/>
<dbReference type="KEGG" id="rno:362235"/>
<dbReference type="UCSC" id="RGD:1310753">
    <property type="organism name" value="rat"/>
</dbReference>
<dbReference type="AGR" id="RGD:1310753"/>
<dbReference type="CTD" id="79953"/>
<dbReference type="RGD" id="1310753">
    <property type="gene designation" value="Syndig1"/>
</dbReference>
<dbReference type="eggNOG" id="ENOG502QQXK">
    <property type="taxonomic scope" value="Eukaryota"/>
</dbReference>
<dbReference type="GeneTree" id="ENSGT00950000183147"/>
<dbReference type="HOGENOM" id="CLU_094250_0_0_1"/>
<dbReference type="InParanoid" id="Q58DZ9"/>
<dbReference type="OMA" id="SWGDGMA"/>
<dbReference type="OrthoDB" id="8440917at2759"/>
<dbReference type="PhylomeDB" id="Q58DZ9"/>
<dbReference type="TreeFam" id="TF331357"/>
<dbReference type="PRO" id="PR:Q58DZ9"/>
<dbReference type="Proteomes" id="UP000002494">
    <property type="component" value="Chromosome 3"/>
</dbReference>
<dbReference type="Bgee" id="ENSRNOG00000031536">
    <property type="expression patterns" value="Expressed in cerebellum and 14 other cell types or tissues"/>
</dbReference>
<dbReference type="GO" id="GO:0044297">
    <property type="term" value="C:cell body"/>
    <property type="evidence" value="ECO:0000314"/>
    <property type="project" value="UniProtKB"/>
</dbReference>
<dbReference type="GO" id="GO:0043198">
    <property type="term" value="C:dendritic shaft"/>
    <property type="evidence" value="ECO:0000314"/>
    <property type="project" value="UniProtKB"/>
</dbReference>
<dbReference type="GO" id="GO:0043197">
    <property type="term" value="C:dendritic spine"/>
    <property type="evidence" value="ECO:0000314"/>
    <property type="project" value="UniProtKB"/>
</dbReference>
<dbReference type="GO" id="GO:0031901">
    <property type="term" value="C:early endosome membrane"/>
    <property type="evidence" value="ECO:0000250"/>
    <property type="project" value="UniProtKB"/>
</dbReference>
<dbReference type="GO" id="GO:0060076">
    <property type="term" value="C:excitatory synapse"/>
    <property type="evidence" value="ECO:0000314"/>
    <property type="project" value="UniProtKB"/>
</dbReference>
<dbReference type="GO" id="GO:0098978">
    <property type="term" value="C:glutamatergic synapse"/>
    <property type="evidence" value="ECO:0000314"/>
    <property type="project" value="SynGO"/>
</dbReference>
<dbReference type="GO" id="GO:0043231">
    <property type="term" value="C:intracellular membrane-bounded organelle"/>
    <property type="evidence" value="ECO:0000318"/>
    <property type="project" value="GO_Central"/>
</dbReference>
<dbReference type="GO" id="GO:0005886">
    <property type="term" value="C:plasma membrane"/>
    <property type="evidence" value="ECO:0000250"/>
    <property type="project" value="UniProtKB"/>
</dbReference>
<dbReference type="GO" id="GO:0014069">
    <property type="term" value="C:postsynaptic density"/>
    <property type="evidence" value="ECO:0000250"/>
    <property type="project" value="UniProtKB"/>
</dbReference>
<dbReference type="GO" id="GO:0098839">
    <property type="term" value="C:postsynaptic density membrane"/>
    <property type="evidence" value="ECO:0000314"/>
    <property type="project" value="SynGO"/>
</dbReference>
<dbReference type="GO" id="GO:0030672">
    <property type="term" value="C:synaptic vesicle membrane"/>
    <property type="evidence" value="ECO:0000266"/>
    <property type="project" value="RGD"/>
</dbReference>
<dbReference type="GO" id="GO:0035254">
    <property type="term" value="F:glutamate receptor binding"/>
    <property type="evidence" value="ECO:0000250"/>
    <property type="project" value="UniProtKB"/>
</dbReference>
<dbReference type="GO" id="GO:0042803">
    <property type="term" value="F:protein homodimerization activity"/>
    <property type="evidence" value="ECO:0000250"/>
    <property type="project" value="UniProtKB"/>
</dbReference>
<dbReference type="GO" id="GO:0006886">
    <property type="term" value="P:intracellular protein transport"/>
    <property type="evidence" value="ECO:0000250"/>
    <property type="project" value="UniProtKB"/>
</dbReference>
<dbReference type="GO" id="GO:0051965">
    <property type="term" value="P:positive regulation of synapse assembly"/>
    <property type="evidence" value="ECO:0000315"/>
    <property type="project" value="UniProtKB"/>
</dbReference>
<dbReference type="GO" id="GO:0150052">
    <property type="term" value="P:regulation of postsynapse assembly"/>
    <property type="evidence" value="ECO:0000314"/>
    <property type="project" value="SynGO"/>
</dbReference>
<dbReference type="GO" id="GO:0097091">
    <property type="term" value="P:synaptic vesicle clustering"/>
    <property type="evidence" value="ECO:0000314"/>
    <property type="project" value="UniProtKB"/>
</dbReference>
<dbReference type="InterPro" id="IPR007593">
    <property type="entry name" value="CD225/Dispanin_fam"/>
</dbReference>
<dbReference type="PANTHER" id="PTHR14768:SF3">
    <property type="entry name" value="SYNAPSE DIFFERENTIATION-INDUCING GENE PROTEIN 1"/>
    <property type="match status" value="1"/>
</dbReference>
<dbReference type="PANTHER" id="PTHR14768">
    <property type="entry name" value="UPF0338 PROTEIN"/>
    <property type="match status" value="1"/>
</dbReference>
<dbReference type="Pfam" id="PF04505">
    <property type="entry name" value="CD225"/>
    <property type="match status" value="1"/>
</dbReference>
<organism>
    <name type="scientific">Rattus norvegicus</name>
    <name type="common">Rat</name>
    <dbReference type="NCBI Taxonomy" id="10116"/>
    <lineage>
        <taxon>Eukaryota</taxon>
        <taxon>Metazoa</taxon>
        <taxon>Chordata</taxon>
        <taxon>Craniata</taxon>
        <taxon>Vertebrata</taxon>
        <taxon>Euteleostomi</taxon>
        <taxon>Mammalia</taxon>
        <taxon>Eutheria</taxon>
        <taxon>Euarchontoglires</taxon>
        <taxon>Glires</taxon>
        <taxon>Rodentia</taxon>
        <taxon>Myomorpha</taxon>
        <taxon>Muroidea</taxon>
        <taxon>Muridae</taxon>
        <taxon>Murinae</taxon>
        <taxon>Rattus</taxon>
    </lineage>
</organism>
<accession>Q58DZ9</accession>
<proteinExistence type="evidence at protein level"/>
<feature type="chain" id="PRO_0000249458" description="Synapse differentiation-inducing gene protein 1">
    <location>
        <begin position="1"/>
        <end position="258"/>
    </location>
</feature>
<feature type="topological domain" description="Cytoplasmic" evidence="2">
    <location>
        <begin position="1"/>
        <end position="181"/>
    </location>
</feature>
<feature type="transmembrane region" description="Helical" evidence="2">
    <location>
        <begin position="182"/>
        <end position="202"/>
    </location>
</feature>
<feature type="topological domain" description="Extracellular" evidence="2">
    <location>
        <begin position="203"/>
        <end position="228"/>
    </location>
</feature>
<feature type="intramembrane region" description="Helical" evidence="2">
    <location>
        <begin position="229"/>
        <end position="249"/>
    </location>
</feature>
<feature type="topological domain" description="Extracellular" evidence="2">
    <location>
        <begin position="250"/>
        <end position="258"/>
    </location>
</feature>
<feature type="modified residue" description="Phosphoserine" evidence="6">
    <location>
        <position position="137"/>
    </location>
</feature>
<evidence type="ECO:0000250" key="1"/>
<evidence type="ECO:0000255" key="2"/>
<evidence type="ECO:0000269" key="3">
    <source>
    </source>
</evidence>
<evidence type="ECO:0000269" key="4">
    <source>
    </source>
</evidence>
<evidence type="ECO:0000305" key="5"/>
<evidence type="ECO:0007744" key="6">
    <source>
    </source>
</evidence>
<reference key="1">
    <citation type="journal article" date="2004" name="Genome Res.">
        <title>The status, quality, and expansion of the NIH full-length cDNA project: the Mammalian Gene Collection (MGC).</title>
        <authorList>
            <consortium name="The MGC Project Team"/>
        </authorList>
    </citation>
    <scope>NUCLEOTIDE SEQUENCE [LARGE SCALE MRNA]</scope>
    <source>
        <tissue>Brain</tissue>
    </source>
</reference>
<reference key="2">
    <citation type="journal article" date="2010" name="Neuron">
        <title>SynDIG1: an activity-regulated, AMPA- receptor-interacting transmembrane protein that regulates excitatory synapse development.</title>
        <authorList>
            <person name="Kalashnikova E."/>
            <person name="Lorca R.A."/>
            <person name="Kaur I."/>
            <person name="Barisone G.A."/>
            <person name="Li B."/>
            <person name="Ishimaru T."/>
            <person name="Trimmer J.S."/>
            <person name="Mohapatra D.P."/>
            <person name="Diaz E."/>
        </authorList>
    </citation>
    <scope>FUNCTION</scope>
    <scope>SUBCELLULAR LOCATION</scope>
    <scope>TISSUE SPECIFICITY</scope>
    <scope>DEVELOPMENTAL STAGE</scope>
</reference>
<reference key="3">
    <citation type="journal article" date="2012" name="Nat. Commun.">
        <title>Quantitative maps of protein phosphorylation sites across 14 different rat organs and tissues.</title>
        <authorList>
            <person name="Lundby A."/>
            <person name="Secher A."/>
            <person name="Lage K."/>
            <person name="Nordsborg N.B."/>
            <person name="Dmytriyev A."/>
            <person name="Lundby C."/>
            <person name="Olsen J.V."/>
        </authorList>
    </citation>
    <scope>PHOSPHORYLATION [LARGE SCALE ANALYSIS] AT SER-137</scope>
    <scope>IDENTIFICATION BY MASS SPECTROMETRY [LARGE SCALE ANALYSIS]</scope>
</reference>
<reference key="4">
    <citation type="journal article" date="2012" name="PLoS ONE">
        <title>The dispanins: a novel gene family of ancient origin that contains 14 human members.</title>
        <authorList>
            <person name="Sallman Almen M."/>
            <person name="Bringeland N."/>
            <person name="Fredriksson R."/>
            <person name="Schioth H.B."/>
        </authorList>
    </citation>
    <scope>GENE FAMILY</scope>
</reference>
<reference key="5">
    <citation type="journal article" date="2016" name="J. Comp. Neurol.">
        <title>Distribution of the SynDIG4/proline-rich transmembrane protein 1 in rat brain.</title>
        <authorList>
            <person name="Kirk L.M."/>
            <person name="Ti S.W."/>
            <person name="Bishop H.I."/>
            <person name="Orozco-Llamas M."/>
            <person name="Pham M."/>
            <person name="Trimmer J.S."/>
            <person name="Diaz E."/>
        </authorList>
    </citation>
    <scope>SUBCELLULAR LOCATION</scope>
    <scope>TISSUE SPECIFICITY</scope>
    <scope>DEVELOPMENTAL STAGE</scope>
</reference>
<comment type="function">
    <text evidence="3">May regulate AMPA receptor content at nascent synapses, and have a role in postsynaptic development and maturation.</text>
</comment>
<comment type="subunit">
    <text evidence="1">Homodimer. Interacts with GRIA1 and GRIA2 (By similarity).</text>
</comment>
<comment type="subcellular location">
    <subcellularLocation>
        <location evidence="3">Cell membrane</location>
        <topology evidence="3">Single-pass type II membrane protein</topology>
    </subcellularLocation>
    <subcellularLocation>
        <location evidence="1">Early endosome membrane</location>
        <topology evidence="1">Single-pass type II membrane protein</topology>
    </subcellularLocation>
    <subcellularLocation>
        <location evidence="4">Postsynaptic density membrane</location>
    </subcellularLocation>
    <subcellularLocation>
        <location evidence="3">Synapse</location>
    </subcellularLocation>
    <subcellularLocation>
        <location evidence="3">Cell projection</location>
        <location evidence="3">Dendrite</location>
    </subcellularLocation>
    <subcellularLocation>
        <location evidence="3">Cell projection</location>
        <location evidence="3">Dendritic spine</location>
    </subcellularLocation>
    <text evidence="1">Shuttles between the cell surface and early endosome membrane.</text>
</comment>
<comment type="tissue specificity">
    <text evidence="3 4">Enriched in the cerebellum and also expressed in the neocortex and modestly in the hippocampus (at protein level) (PubMed:26660156). Expressed in hippocampal neurons, both in cell body and neurites, however its presence is enriched at excitatory synapses and also found in postsynaptic cells (PubMed:20152115).</text>
</comment>
<comment type="developmental stage">
    <text evidence="3 4">Expressed during synaptogenesis with levels peaking during the second week of postnatal development (PubMed:20152115). Expression increases between postnatal days 7 and 14 and remains high at postnatal day 21 and at 2 months of age (PubMed:26660156). As development proceeds, an increasing percentage becomes localized to excitatory synapses (PubMed:20152115).</text>
</comment>
<comment type="similarity">
    <text evidence="5">Belongs to the CD225/Dispanin family.</text>
</comment>
<protein>
    <recommendedName>
        <fullName>Synapse differentiation-inducing gene protein 1</fullName>
        <shortName>SynDIG1</shortName>
    </recommendedName>
    <alternativeName>
        <fullName>Dispanin subfamily C member 2</fullName>
        <shortName>DSPC2</shortName>
    </alternativeName>
    <alternativeName>
        <fullName>Transmembrane protein 90B</fullName>
    </alternativeName>
</protein>
<gene>
    <name type="primary">Syndig1</name>
    <name type="synonym">Tmem90b</name>
</gene>